<sequence length="320" mass="36202">MVTVVDRVTDRRLRHPEKAHRPDTSVQKKPDWIRVKAPTSQVYKETHGIVRAHKLVTVCEEAGCPNIGECWSQRHASFMILGEICTRACAFCNVATGIPFAVDENEPERVADAVARMELKHVVITSVDRDDLADGGAEHFAKVIYAIRRKAPKTTIEVLTPDFRHKDGALEIVVAAKPDVFNHNLETVPSKYLKVRPGARYFHSIRLLQRVKELDPTIFTKSGIMVGLGEERNEILQLMDDLRSADVDFMTIGQYLQPTRKHHPVIRFVPPEEFESFAKIGKVKGFLHMASNPLTRSSHHAGDDFAILQKARDEKFALQR</sequence>
<organism>
    <name type="scientific">Bartonella henselae (strain ATCC 49882 / DSM 28221 / CCUG 30454 / Houston 1)</name>
    <name type="common">Rochalimaea henselae</name>
    <dbReference type="NCBI Taxonomy" id="283166"/>
    <lineage>
        <taxon>Bacteria</taxon>
        <taxon>Pseudomonadati</taxon>
        <taxon>Pseudomonadota</taxon>
        <taxon>Alphaproteobacteria</taxon>
        <taxon>Hyphomicrobiales</taxon>
        <taxon>Bartonellaceae</taxon>
        <taxon>Bartonella</taxon>
    </lineage>
</organism>
<dbReference type="EC" id="2.8.1.8" evidence="1"/>
<dbReference type="EMBL" id="BX897699">
    <property type="protein sequence ID" value="CAF27387.1"/>
    <property type="molecule type" value="Genomic_DNA"/>
</dbReference>
<dbReference type="RefSeq" id="WP_011180508.1">
    <property type="nucleotide sequence ID" value="NZ_LRIJ02000001.1"/>
</dbReference>
<dbReference type="SMR" id="Q6G401"/>
<dbReference type="PaxDb" id="283166-BH05790"/>
<dbReference type="DNASU" id="2865584"/>
<dbReference type="EnsemblBacteria" id="CAF27387">
    <property type="protein sequence ID" value="CAF27387"/>
    <property type="gene ID" value="BH05790"/>
</dbReference>
<dbReference type="GeneID" id="92985238"/>
<dbReference type="KEGG" id="bhe:BH05790"/>
<dbReference type="eggNOG" id="COG0320">
    <property type="taxonomic scope" value="Bacteria"/>
</dbReference>
<dbReference type="OrthoDB" id="9787898at2"/>
<dbReference type="UniPathway" id="UPA00538">
    <property type="reaction ID" value="UER00593"/>
</dbReference>
<dbReference type="Proteomes" id="UP000000421">
    <property type="component" value="Chromosome"/>
</dbReference>
<dbReference type="GO" id="GO:0005737">
    <property type="term" value="C:cytoplasm"/>
    <property type="evidence" value="ECO:0007669"/>
    <property type="project" value="UniProtKB-SubCell"/>
</dbReference>
<dbReference type="GO" id="GO:0051539">
    <property type="term" value="F:4 iron, 4 sulfur cluster binding"/>
    <property type="evidence" value="ECO:0007669"/>
    <property type="project" value="UniProtKB-UniRule"/>
</dbReference>
<dbReference type="GO" id="GO:0016992">
    <property type="term" value="F:lipoate synthase activity"/>
    <property type="evidence" value="ECO:0007669"/>
    <property type="project" value="UniProtKB-UniRule"/>
</dbReference>
<dbReference type="GO" id="GO:0046872">
    <property type="term" value="F:metal ion binding"/>
    <property type="evidence" value="ECO:0007669"/>
    <property type="project" value="UniProtKB-KW"/>
</dbReference>
<dbReference type="CDD" id="cd01335">
    <property type="entry name" value="Radical_SAM"/>
    <property type="match status" value="1"/>
</dbReference>
<dbReference type="FunFam" id="3.20.20.70:FF:000040">
    <property type="entry name" value="Lipoyl synthase"/>
    <property type="match status" value="1"/>
</dbReference>
<dbReference type="Gene3D" id="3.20.20.70">
    <property type="entry name" value="Aldolase class I"/>
    <property type="match status" value="1"/>
</dbReference>
<dbReference type="HAMAP" id="MF_00206">
    <property type="entry name" value="Lipoyl_synth"/>
    <property type="match status" value="1"/>
</dbReference>
<dbReference type="InterPro" id="IPR013785">
    <property type="entry name" value="Aldolase_TIM"/>
</dbReference>
<dbReference type="InterPro" id="IPR006638">
    <property type="entry name" value="Elp3/MiaA/NifB-like_rSAM"/>
</dbReference>
<dbReference type="InterPro" id="IPR003698">
    <property type="entry name" value="Lipoyl_synth"/>
</dbReference>
<dbReference type="InterPro" id="IPR007197">
    <property type="entry name" value="rSAM"/>
</dbReference>
<dbReference type="NCBIfam" id="TIGR00510">
    <property type="entry name" value="lipA"/>
    <property type="match status" value="1"/>
</dbReference>
<dbReference type="NCBIfam" id="NF004019">
    <property type="entry name" value="PRK05481.1"/>
    <property type="match status" value="1"/>
</dbReference>
<dbReference type="NCBIfam" id="NF009544">
    <property type="entry name" value="PRK12928.1"/>
    <property type="match status" value="1"/>
</dbReference>
<dbReference type="PANTHER" id="PTHR10949">
    <property type="entry name" value="LIPOYL SYNTHASE"/>
    <property type="match status" value="1"/>
</dbReference>
<dbReference type="PANTHER" id="PTHR10949:SF0">
    <property type="entry name" value="LIPOYL SYNTHASE, MITOCHONDRIAL"/>
    <property type="match status" value="1"/>
</dbReference>
<dbReference type="Pfam" id="PF04055">
    <property type="entry name" value="Radical_SAM"/>
    <property type="match status" value="1"/>
</dbReference>
<dbReference type="PIRSF" id="PIRSF005963">
    <property type="entry name" value="Lipoyl_synth"/>
    <property type="match status" value="1"/>
</dbReference>
<dbReference type="SFLD" id="SFLDF00271">
    <property type="entry name" value="lipoyl_synthase"/>
    <property type="match status" value="1"/>
</dbReference>
<dbReference type="SFLD" id="SFLDS00029">
    <property type="entry name" value="Radical_SAM"/>
    <property type="match status" value="1"/>
</dbReference>
<dbReference type="SMART" id="SM00729">
    <property type="entry name" value="Elp3"/>
    <property type="match status" value="1"/>
</dbReference>
<dbReference type="SUPFAM" id="SSF102114">
    <property type="entry name" value="Radical SAM enzymes"/>
    <property type="match status" value="1"/>
</dbReference>
<dbReference type="PROSITE" id="PS51918">
    <property type="entry name" value="RADICAL_SAM"/>
    <property type="match status" value="1"/>
</dbReference>
<protein>
    <recommendedName>
        <fullName evidence="1">Lipoyl synthase</fullName>
        <ecNumber evidence="1">2.8.1.8</ecNumber>
    </recommendedName>
    <alternativeName>
        <fullName evidence="1">Lip-syn</fullName>
        <shortName evidence="1">LS</shortName>
    </alternativeName>
    <alternativeName>
        <fullName evidence="1">Lipoate synthase</fullName>
    </alternativeName>
    <alternativeName>
        <fullName evidence="1">Lipoic acid synthase</fullName>
    </alternativeName>
    <alternativeName>
        <fullName evidence="1">Sulfur insertion protein LipA</fullName>
    </alternativeName>
</protein>
<evidence type="ECO:0000255" key="1">
    <source>
        <dbReference type="HAMAP-Rule" id="MF_00206"/>
    </source>
</evidence>
<evidence type="ECO:0000255" key="2">
    <source>
        <dbReference type="PROSITE-ProRule" id="PRU01266"/>
    </source>
</evidence>
<evidence type="ECO:0000256" key="3">
    <source>
        <dbReference type="SAM" id="MobiDB-lite"/>
    </source>
</evidence>
<accession>Q6G401</accession>
<name>LIPA_BARHE</name>
<reference key="1">
    <citation type="journal article" date="2004" name="Proc. Natl. Acad. Sci. U.S.A.">
        <title>The louse-borne human pathogen Bartonella quintana is a genomic derivative of the zoonotic agent Bartonella henselae.</title>
        <authorList>
            <person name="Alsmark U.C.M."/>
            <person name="Frank A.C."/>
            <person name="Karlberg E.O."/>
            <person name="Legault B.-A."/>
            <person name="Ardell D.H."/>
            <person name="Canbaeck B."/>
            <person name="Eriksson A.-S."/>
            <person name="Naeslund A.K."/>
            <person name="Handley S.A."/>
            <person name="Huvet M."/>
            <person name="La Scola B."/>
            <person name="Holmberg M."/>
            <person name="Andersson S.G.E."/>
        </authorList>
    </citation>
    <scope>NUCLEOTIDE SEQUENCE [LARGE SCALE GENOMIC DNA]</scope>
    <source>
        <strain>ATCC 49882 / DSM 28221 / CCUG 30454 / Houston 1</strain>
    </source>
</reference>
<feature type="chain" id="PRO_1000012189" description="Lipoyl synthase">
    <location>
        <begin position="1"/>
        <end position="320"/>
    </location>
</feature>
<feature type="domain" description="Radical SAM core" evidence="2">
    <location>
        <begin position="71"/>
        <end position="287"/>
    </location>
</feature>
<feature type="region of interest" description="Disordered" evidence="3">
    <location>
        <begin position="1"/>
        <end position="28"/>
    </location>
</feature>
<feature type="compositionally biased region" description="Basic and acidic residues" evidence="3">
    <location>
        <begin position="19"/>
        <end position="28"/>
    </location>
</feature>
<feature type="binding site" evidence="1">
    <location>
        <position position="59"/>
    </location>
    <ligand>
        <name>[4Fe-4S] cluster</name>
        <dbReference type="ChEBI" id="CHEBI:49883"/>
        <label>1</label>
    </ligand>
</feature>
<feature type="binding site" evidence="1">
    <location>
        <position position="64"/>
    </location>
    <ligand>
        <name>[4Fe-4S] cluster</name>
        <dbReference type="ChEBI" id="CHEBI:49883"/>
        <label>1</label>
    </ligand>
</feature>
<feature type="binding site" evidence="1">
    <location>
        <position position="70"/>
    </location>
    <ligand>
        <name>[4Fe-4S] cluster</name>
        <dbReference type="ChEBI" id="CHEBI:49883"/>
        <label>1</label>
    </ligand>
</feature>
<feature type="binding site" evidence="1">
    <location>
        <position position="85"/>
    </location>
    <ligand>
        <name>[4Fe-4S] cluster</name>
        <dbReference type="ChEBI" id="CHEBI:49883"/>
        <label>2</label>
        <note>4Fe-4S-S-AdoMet</note>
    </ligand>
</feature>
<feature type="binding site" evidence="1">
    <location>
        <position position="89"/>
    </location>
    <ligand>
        <name>[4Fe-4S] cluster</name>
        <dbReference type="ChEBI" id="CHEBI:49883"/>
        <label>2</label>
        <note>4Fe-4S-S-AdoMet</note>
    </ligand>
</feature>
<feature type="binding site" evidence="1">
    <location>
        <position position="92"/>
    </location>
    <ligand>
        <name>[4Fe-4S] cluster</name>
        <dbReference type="ChEBI" id="CHEBI:49883"/>
        <label>2</label>
        <note>4Fe-4S-S-AdoMet</note>
    </ligand>
</feature>
<feature type="binding site" evidence="1">
    <location>
        <position position="298"/>
    </location>
    <ligand>
        <name>[4Fe-4S] cluster</name>
        <dbReference type="ChEBI" id="CHEBI:49883"/>
        <label>1</label>
    </ligand>
</feature>
<proteinExistence type="inferred from homology"/>
<keyword id="KW-0004">4Fe-4S</keyword>
<keyword id="KW-0963">Cytoplasm</keyword>
<keyword id="KW-0408">Iron</keyword>
<keyword id="KW-0411">Iron-sulfur</keyword>
<keyword id="KW-0479">Metal-binding</keyword>
<keyword id="KW-0949">S-adenosyl-L-methionine</keyword>
<keyword id="KW-0808">Transferase</keyword>
<gene>
    <name evidence="1" type="primary">lipA</name>
    <name type="ordered locus">BH05790</name>
</gene>
<comment type="function">
    <text evidence="1">Catalyzes the radical-mediated insertion of two sulfur atoms into the C-6 and C-8 positions of the octanoyl moiety bound to the lipoyl domains of lipoate-dependent enzymes, thereby converting the octanoylated domains into lipoylated derivatives.</text>
</comment>
<comment type="catalytic activity">
    <reaction evidence="1">
        <text>[[Fe-S] cluster scaffold protein carrying a second [4Fe-4S](2+) cluster] + N(6)-octanoyl-L-lysyl-[protein] + 2 oxidized [2Fe-2S]-[ferredoxin] + 2 S-adenosyl-L-methionine + 4 H(+) = [[Fe-S] cluster scaffold protein] + N(6)-[(R)-dihydrolipoyl]-L-lysyl-[protein] + 4 Fe(3+) + 2 hydrogen sulfide + 2 5'-deoxyadenosine + 2 L-methionine + 2 reduced [2Fe-2S]-[ferredoxin]</text>
        <dbReference type="Rhea" id="RHEA:16585"/>
        <dbReference type="Rhea" id="RHEA-COMP:9928"/>
        <dbReference type="Rhea" id="RHEA-COMP:10000"/>
        <dbReference type="Rhea" id="RHEA-COMP:10001"/>
        <dbReference type="Rhea" id="RHEA-COMP:10475"/>
        <dbReference type="Rhea" id="RHEA-COMP:14568"/>
        <dbReference type="Rhea" id="RHEA-COMP:14569"/>
        <dbReference type="ChEBI" id="CHEBI:15378"/>
        <dbReference type="ChEBI" id="CHEBI:17319"/>
        <dbReference type="ChEBI" id="CHEBI:29034"/>
        <dbReference type="ChEBI" id="CHEBI:29919"/>
        <dbReference type="ChEBI" id="CHEBI:33722"/>
        <dbReference type="ChEBI" id="CHEBI:33737"/>
        <dbReference type="ChEBI" id="CHEBI:33738"/>
        <dbReference type="ChEBI" id="CHEBI:57844"/>
        <dbReference type="ChEBI" id="CHEBI:59789"/>
        <dbReference type="ChEBI" id="CHEBI:78809"/>
        <dbReference type="ChEBI" id="CHEBI:83100"/>
        <dbReference type="EC" id="2.8.1.8"/>
    </reaction>
</comment>
<comment type="cofactor">
    <cofactor evidence="1">
        <name>[4Fe-4S] cluster</name>
        <dbReference type="ChEBI" id="CHEBI:49883"/>
    </cofactor>
    <text evidence="1">Binds 2 [4Fe-4S] clusters per subunit. One cluster is coordinated with 3 cysteines and an exchangeable S-adenosyl-L-methionine.</text>
</comment>
<comment type="pathway">
    <text evidence="1">Protein modification; protein lipoylation via endogenous pathway; protein N(6)-(lipoyl)lysine from octanoyl-[acyl-carrier-protein]: step 2/2.</text>
</comment>
<comment type="subcellular location">
    <subcellularLocation>
        <location evidence="1">Cytoplasm</location>
    </subcellularLocation>
</comment>
<comment type="similarity">
    <text evidence="1">Belongs to the radical SAM superfamily. Lipoyl synthase family.</text>
</comment>